<feature type="chain" id="PRO_0000414665" description="Cell division protein FtsQ">
    <location>
        <begin position="1"/>
        <end position="272"/>
    </location>
</feature>
<feature type="topological domain" description="Cytoplasmic" evidence="1">
    <location>
        <begin position="1"/>
        <end position="43"/>
    </location>
</feature>
<feature type="transmembrane region" description="Helical" evidence="1">
    <location>
        <begin position="44"/>
        <end position="64"/>
    </location>
</feature>
<feature type="topological domain" description="Extracellular" evidence="1">
    <location>
        <begin position="65"/>
        <end position="272"/>
    </location>
</feature>
<feature type="domain" description="POTRA" evidence="2">
    <location>
        <begin position="66"/>
        <end position="133"/>
    </location>
</feature>
<gene>
    <name evidence="1" type="primary">ftsQ</name>
    <name type="ordered locus">Caur_0750</name>
</gene>
<keyword id="KW-0131">Cell cycle</keyword>
<keyword id="KW-0132">Cell division</keyword>
<keyword id="KW-1003">Cell membrane</keyword>
<keyword id="KW-0472">Membrane</keyword>
<keyword id="KW-1185">Reference proteome</keyword>
<keyword id="KW-0812">Transmembrane</keyword>
<keyword id="KW-1133">Transmembrane helix</keyword>
<comment type="function">
    <text evidence="1">Essential cell division protein.</text>
</comment>
<comment type="subcellular location">
    <subcellularLocation>
        <location evidence="1">Cell membrane</location>
        <topology evidence="1">Single-pass type II membrane protein</topology>
    </subcellularLocation>
    <text evidence="1">Localizes to the division septum.</text>
</comment>
<comment type="similarity">
    <text evidence="1">Belongs to the FtsQ/DivIB family. FtsQ subfamily.</text>
</comment>
<protein>
    <recommendedName>
        <fullName evidence="1">Cell division protein FtsQ</fullName>
    </recommendedName>
</protein>
<dbReference type="EMBL" id="CP000909">
    <property type="protein sequence ID" value="ABY33988.1"/>
    <property type="molecule type" value="Genomic_DNA"/>
</dbReference>
<dbReference type="RefSeq" id="WP_012256644.1">
    <property type="nucleotide sequence ID" value="NC_010175.1"/>
</dbReference>
<dbReference type="RefSeq" id="YP_001634377.1">
    <property type="nucleotide sequence ID" value="NC_010175.1"/>
</dbReference>
<dbReference type="SMR" id="A9WG67"/>
<dbReference type="STRING" id="324602.Caur_0750"/>
<dbReference type="EnsemblBacteria" id="ABY33988">
    <property type="protein sequence ID" value="ABY33988"/>
    <property type="gene ID" value="Caur_0750"/>
</dbReference>
<dbReference type="KEGG" id="cau:Caur_0750"/>
<dbReference type="PATRIC" id="fig|324602.8.peg.855"/>
<dbReference type="eggNOG" id="COG1589">
    <property type="taxonomic scope" value="Bacteria"/>
</dbReference>
<dbReference type="HOGENOM" id="CLU_1021937_0_0_0"/>
<dbReference type="InParanoid" id="A9WG67"/>
<dbReference type="Proteomes" id="UP000002008">
    <property type="component" value="Chromosome"/>
</dbReference>
<dbReference type="GO" id="GO:0032153">
    <property type="term" value="C:cell division site"/>
    <property type="evidence" value="ECO:0007669"/>
    <property type="project" value="UniProtKB-UniRule"/>
</dbReference>
<dbReference type="GO" id="GO:0005886">
    <property type="term" value="C:plasma membrane"/>
    <property type="evidence" value="ECO:0007669"/>
    <property type="project" value="UniProtKB-SubCell"/>
</dbReference>
<dbReference type="GO" id="GO:0090529">
    <property type="term" value="P:cell septum assembly"/>
    <property type="evidence" value="ECO:0007669"/>
    <property type="project" value="InterPro"/>
</dbReference>
<dbReference type="GO" id="GO:0043093">
    <property type="term" value="P:FtsZ-dependent cytokinesis"/>
    <property type="evidence" value="ECO:0007669"/>
    <property type="project" value="UniProtKB-UniRule"/>
</dbReference>
<dbReference type="HAMAP" id="MF_00911">
    <property type="entry name" value="FtsQ_subfam"/>
    <property type="match status" value="1"/>
</dbReference>
<dbReference type="InterPro" id="IPR005548">
    <property type="entry name" value="Cell_div_FtsQ/DivIB_C"/>
</dbReference>
<dbReference type="InterPro" id="IPR026579">
    <property type="entry name" value="FtsQ"/>
</dbReference>
<dbReference type="InterPro" id="IPR050487">
    <property type="entry name" value="FtsQ_DivIB"/>
</dbReference>
<dbReference type="InterPro" id="IPR034746">
    <property type="entry name" value="POTRA"/>
</dbReference>
<dbReference type="InterPro" id="IPR013685">
    <property type="entry name" value="POTRA_FtsQ_type"/>
</dbReference>
<dbReference type="PANTHER" id="PTHR37820">
    <property type="entry name" value="CELL DIVISION PROTEIN DIVIB"/>
    <property type="match status" value="1"/>
</dbReference>
<dbReference type="PANTHER" id="PTHR37820:SF1">
    <property type="entry name" value="CELL DIVISION PROTEIN FTSQ"/>
    <property type="match status" value="1"/>
</dbReference>
<dbReference type="Pfam" id="PF03799">
    <property type="entry name" value="FtsQ_DivIB_C"/>
    <property type="match status" value="1"/>
</dbReference>
<dbReference type="Pfam" id="PF08478">
    <property type="entry name" value="POTRA_1"/>
    <property type="match status" value="1"/>
</dbReference>
<dbReference type="PROSITE" id="PS51779">
    <property type="entry name" value="POTRA"/>
    <property type="match status" value="1"/>
</dbReference>
<reference key="1">
    <citation type="journal article" date="2011" name="BMC Genomics">
        <title>Complete genome sequence of the filamentous anoxygenic phototrophic bacterium Chloroflexus aurantiacus.</title>
        <authorList>
            <person name="Tang K.H."/>
            <person name="Barry K."/>
            <person name="Chertkov O."/>
            <person name="Dalin E."/>
            <person name="Han C.S."/>
            <person name="Hauser L.J."/>
            <person name="Honchak B.M."/>
            <person name="Karbach L.E."/>
            <person name="Land M.L."/>
            <person name="Lapidus A."/>
            <person name="Larimer F.W."/>
            <person name="Mikhailova N."/>
            <person name="Pitluck S."/>
            <person name="Pierson B.K."/>
            <person name="Blankenship R.E."/>
        </authorList>
    </citation>
    <scope>NUCLEOTIDE SEQUENCE [LARGE SCALE GENOMIC DNA]</scope>
    <source>
        <strain>ATCC 29366 / DSM 635 / J-10-fl</strain>
    </source>
</reference>
<accession>A9WG67</accession>
<sequence length="272" mass="30828">MEYNPPNTRERIVARRQRMRRNSTEPVVPGWRWRLREGLRSGRIVSGIVFVISCFALFYVLFSSRFRVQTVEVVGAEFLSPERIVAAVPLRGLPIWLVDEEQAVAPLLTSPFVEEARLTLSLPDRARIVIVERQPAIYWRTGGVDYLVDRQGYVIEAAATPPAEDELVIVDSSNLPVEPGMRLDTDALTLARELAFVLPNQIGLHPAQIGWDFGLGVFVRTAQDQMIVFGRSERLERKLTILAYLLADGTPFTYLDLRPVNPFYQYRPDGSS</sequence>
<proteinExistence type="inferred from homology"/>
<organism>
    <name type="scientific">Chloroflexus aurantiacus (strain ATCC 29366 / DSM 635 / J-10-fl)</name>
    <dbReference type="NCBI Taxonomy" id="324602"/>
    <lineage>
        <taxon>Bacteria</taxon>
        <taxon>Bacillati</taxon>
        <taxon>Chloroflexota</taxon>
        <taxon>Chloroflexia</taxon>
        <taxon>Chloroflexales</taxon>
        <taxon>Chloroflexineae</taxon>
        <taxon>Chloroflexaceae</taxon>
        <taxon>Chloroflexus</taxon>
    </lineage>
</organism>
<evidence type="ECO:0000255" key="1">
    <source>
        <dbReference type="HAMAP-Rule" id="MF_00911"/>
    </source>
</evidence>
<evidence type="ECO:0000255" key="2">
    <source>
        <dbReference type="PROSITE-ProRule" id="PRU01115"/>
    </source>
</evidence>
<name>FTSQ_CHLAA</name>